<comment type="function">
    <text evidence="1">DNA-dependent RNA polymerase catalyzes the transcription of DNA into RNA using the four ribonucleoside triphosphates as substrates.</text>
</comment>
<comment type="catalytic activity">
    <reaction evidence="1">
        <text>RNA(n) + a ribonucleoside 5'-triphosphate = RNA(n+1) + diphosphate</text>
        <dbReference type="Rhea" id="RHEA:21248"/>
        <dbReference type="Rhea" id="RHEA-COMP:14527"/>
        <dbReference type="Rhea" id="RHEA-COMP:17342"/>
        <dbReference type="ChEBI" id="CHEBI:33019"/>
        <dbReference type="ChEBI" id="CHEBI:61557"/>
        <dbReference type="ChEBI" id="CHEBI:140395"/>
        <dbReference type="EC" id="2.7.7.6"/>
    </reaction>
</comment>
<comment type="subunit">
    <text evidence="1">In plastids the minimal PEP RNA polymerase catalytic core is composed of four subunits: alpha, beta, beta', and beta''. When a (nuclear-encoded) sigma factor is associated with the core the holoenzyme is formed, which can initiate transcription.</text>
</comment>
<comment type="subcellular location">
    <subcellularLocation>
        <location>Plastid</location>
        <location>Chloroplast</location>
    </subcellularLocation>
</comment>
<comment type="domain">
    <text evidence="1">The N-terminal domain is essential for RNAP assembly and basal transcription, whereas the C-terminal domain is involved in interaction with transcriptional regulators and with upstream promoter elements.</text>
</comment>
<comment type="similarity">
    <text evidence="1">Belongs to the RNA polymerase alpha chain family.</text>
</comment>
<keyword id="KW-0150">Chloroplast</keyword>
<keyword id="KW-0240">DNA-directed RNA polymerase</keyword>
<keyword id="KW-0548">Nucleotidyltransferase</keyword>
<keyword id="KW-0934">Plastid</keyword>
<keyword id="KW-0804">Transcription</keyword>
<keyword id="KW-0808">Transferase</keyword>
<proteinExistence type="inferred from homology"/>
<gene>
    <name evidence="1" type="primary">rpoA</name>
</gene>
<protein>
    <recommendedName>
        <fullName evidence="1">DNA-directed RNA polymerase subunit alpha</fullName>
        <shortName evidence="1">PEP</shortName>
        <ecNumber evidence="1">2.7.7.6</ecNumber>
    </recommendedName>
    <alternativeName>
        <fullName evidence="1">Plastid-encoded RNA polymerase subunit alpha</fullName>
        <shortName evidence="1">RNA polymerase subunit alpha</shortName>
    </alternativeName>
</protein>
<name>RPOA_PINKO</name>
<evidence type="ECO:0000255" key="1">
    <source>
        <dbReference type="HAMAP-Rule" id="MF_00059"/>
    </source>
</evidence>
<organism>
    <name type="scientific">Pinus koraiensis</name>
    <name type="common">Korean pine</name>
    <dbReference type="NCBI Taxonomy" id="88728"/>
    <lineage>
        <taxon>Eukaryota</taxon>
        <taxon>Viridiplantae</taxon>
        <taxon>Streptophyta</taxon>
        <taxon>Embryophyta</taxon>
        <taxon>Tracheophyta</taxon>
        <taxon>Spermatophyta</taxon>
        <taxon>Pinopsida</taxon>
        <taxon>Pinidae</taxon>
        <taxon>Conifers I</taxon>
        <taxon>Pinales</taxon>
        <taxon>Pinaceae</taxon>
        <taxon>Pinus</taxon>
        <taxon>Pinus subgen. Strobus</taxon>
    </lineage>
</organism>
<accession>Q85X01</accession>
<geneLocation type="chloroplast"/>
<reference key="1">
    <citation type="submission" date="2003-02" db="EMBL/GenBank/DDBJ databases">
        <title>Complete nucleotide sequence of Pinus koraiensis.</title>
        <authorList>
            <person name="Noh E.W."/>
            <person name="Lee J.S."/>
            <person name="Choi Y.I."/>
            <person name="Han M.S."/>
            <person name="Yi Y.S."/>
            <person name="Han S.U."/>
        </authorList>
    </citation>
    <scope>NUCLEOTIDE SEQUENCE [LARGE SCALE GENOMIC DNA]</scope>
    <source>
        <strain>KangWon16</strain>
    </source>
</reference>
<dbReference type="EC" id="2.7.7.6" evidence="1"/>
<dbReference type="EMBL" id="AY228468">
    <property type="protein sequence ID" value="AAO74066.1"/>
    <property type="molecule type" value="Genomic_DNA"/>
</dbReference>
<dbReference type="RefSeq" id="NP_817218.1">
    <property type="nucleotide sequence ID" value="NC_004677.2"/>
</dbReference>
<dbReference type="SMR" id="Q85X01"/>
<dbReference type="GeneID" id="806949"/>
<dbReference type="GO" id="GO:0009507">
    <property type="term" value="C:chloroplast"/>
    <property type="evidence" value="ECO:0007669"/>
    <property type="project" value="UniProtKB-SubCell"/>
</dbReference>
<dbReference type="GO" id="GO:0000428">
    <property type="term" value="C:DNA-directed RNA polymerase complex"/>
    <property type="evidence" value="ECO:0007669"/>
    <property type="project" value="UniProtKB-KW"/>
</dbReference>
<dbReference type="GO" id="GO:0005739">
    <property type="term" value="C:mitochondrion"/>
    <property type="evidence" value="ECO:0007669"/>
    <property type="project" value="GOC"/>
</dbReference>
<dbReference type="GO" id="GO:0003677">
    <property type="term" value="F:DNA binding"/>
    <property type="evidence" value="ECO:0007669"/>
    <property type="project" value="UniProtKB-UniRule"/>
</dbReference>
<dbReference type="GO" id="GO:0003899">
    <property type="term" value="F:DNA-directed RNA polymerase activity"/>
    <property type="evidence" value="ECO:0007669"/>
    <property type="project" value="UniProtKB-UniRule"/>
</dbReference>
<dbReference type="GO" id="GO:0046983">
    <property type="term" value="F:protein dimerization activity"/>
    <property type="evidence" value="ECO:0007669"/>
    <property type="project" value="InterPro"/>
</dbReference>
<dbReference type="GO" id="GO:0006351">
    <property type="term" value="P:DNA-templated transcription"/>
    <property type="evidence" value="ECO:0007669"/>
    <property type="project" value="UniProtKB-UniRule"/>
</dbReference>
<dbReference type="CDD" id="cd06928">
    <property type="entry name" value="RNAP_alpha_NTD"/>
    <property type="match status" value="1"/>
</dbReference>
<dbReference type="FunFam" id="2.170.120.12:FF:000001">
    <property type="entry name" value="DNA-directed RNA polymerase subunit alpha"/>
    <property type="match status" value="1"/>
</dbReference>
<dbReference type="Gene3D" id="1.10.150.20">
    <property type="entry name" value="5' to 3' exonuclease, C-terminal subdomain"/>
    <property type="match status" value="1"/>
</dbReference>
<dbReference type="Gene3D" id="2.170.120.12">
    <property type="entry name" value="DNA-directed RNA polymerase, insert domain"/>
    <property type="match status" value="1"/>
</dbReference>
<dbReference type="Gene3D" id="3.30.1360.10">
    <property type="entry name" value="RNA polymerase, RBP11-like subunit"/>
    <property type="match status" value="1"/>
</dbReference>
<dbReference type="HAMAP" id="MF_00059">
    <property type="entry name" value="RNApol_bact_RpoA"/>
    <property type="match status" value="1"/>
</dbReference>
<dbReference type="InterPro" id="IPR011262">
    <property type="entry name" value="DNA-dir_RNA_pol_insert"/>
</dbReference>
<dbReference type="InterPro" id="IPR011263">
    <property type="entry name" value="DNA-dir_RNA_pol_RpoA/D/Rpb3"/>
</dbReference>
<dbReference type="InterPro" id="IPR011773">
    <property type="entry name" value="DNA-dir_RpoA"/>
</dbReference>
<dbReference type="InterPro" id="IPR036603">
    <property type="entry name" value="RBP11-like"/>
</dbReference>
<dbReference type="InterPro" id="IPR011260">
    <property type="entry name" value="RNAP_asu_C"/>
</dbReference>
<dbReference type="InterPro" id="IPR036643">
    <property type="entry name" value="RNApol_insert_sf"/>
</dbReference>
<dbReference type="NCBIfam" id="TIGR02027">
    <property type="entry name" value="rpoA"/>
    <property type="match status" value="1"/>
</dbReference>
<dbReference type="Pfam" id="PF01000">
    <property type="entry name" value="RNA_pol_A_bac"/>
    <property type="match status" value="1"/>
</dbReference>
<dbReference type="Pfam" id="PF03118">
    <property type="entry name" value="RNA_pol_A_CTD"/>
    <property type="match status" value="1"/>
</dbReference>
<dbReference type="Pfam" id="PF01193">
    <property type="entry name" value="RNA_pol_L"/>
    <property type="match status" value="1"/>
</dbReference>
<dbReference type="SMART" id="SM00662">
    <property type="entry name" value="RPOLD"/>
    <property type="match status" value="1"/>
</dbReference>
<dbReference type="SUPFAM" id="SSF47789">
    <property type="entry name" value="C-terminal domain of RNA polymerase alpha subunit"/>
    <property type="match status" value="1"/>
</dbReference>
<dbReference type="SUPFAM" id="SSF56553">
    <property type="entry name" value="Insert subdomain of RNA polymerase alpha subunit"/>
    <property type="match status" value="1"/>
</dbReference>
<dbReference type="SUPFAM" id="SSF55257">
    <property type="entry name" value="RBP11-like subunits of RNA polymerase"/>
    <property type="match status" value="1"/>
</dbReference>
<feature type="chain" id="PRO_0000175481" description="DNA-directed RNA polymerase subunit alpha">
    <location>
        <begin position="1"/>
        <end position="335"/>
    </location>
</feature>
<feature type="region of interest" description="Alpha N-terminal domain (alpha-NTD)" evidence="1">
    <location>
        <begin position="1"/>
        <end position="233"/>
    </location>
</feature>
<feature type="region of interest" description="Alpha C-terminal domain (alpha-CTD)" evidence="1">
    <location>
        <begin position="264"/>
        <end position="335"/>
    </location>
</feature>
<sequence>MIRDKISVSIQTLRWKCIESRAYSKRLHYGRFALSPLRKGRADTIGIAMRRALLGEVEGTCITRVKLENIKHEYSAIIGIEESVHDILMNLKEIVLRSDSYGIREASIYIVGPRNVTAQDIILPPSVKIIDTTQHIARLTKSITSDIRLQIEKNRGYIIHSSNNYQDGIFPIDAVFMPVRDANYSIHSYGSGNEIQEVLFLEIWTNGGLTPREALYEASRNLIDLFIPFLHGEEQNIDGMNNKKGSNMLPFPLSHVLTDTGETKEKIAFKHIFIDQLELPPKTYNSLRRANIHTLLDLLNYSREDLMKIEHLEKESVEQVLEVLRKRFAIDPPRN</sequence>